<feature type="signal peptide" evidence="2">
    <location>
        <begin position="1"/>
        <end position="24"/>
    </location>
</feature>
<feature type="chain" id="PRO_5000395572" description="Carwaprin-a">
    <location>
        <begin position="25"/>
        <end position="75"/>
    </location>
</feature>
<feature type="domain" description="WAP" evidence="3">
    <location>
        <begin position="27"/>
        <end position="72"/>
    </location>
</feature>
<feature type="disulfide bond" evidence="3">
    <location>
        <begin position="34"/>
        <end position="60"/>
    </location>
</feature>
<feature type="disulfide bond" evidence="3">
    <location>
        <begin position="43"/>
        <end position="64"/>
    </location>
</feature>
<feature type="disulfide bond" evidence="3">
    <location>
        <begin position="47"/>
        <end position="59"/>
    </location>
</feature>
<feature type="disulfide bond" evidence="3">
    <location>
        <begin position="53"/>
        <end position="68"/>
    </location>
</feature>
<dbReference type="EMBL" id="DQ917561">
    <property type="protein sequence ID" value="ABK63590.1"/>
    <property type="molecule type" value="mRNA"/>
</dbReference>
<dbReference type="EMBL" id="EU401827">
    <property type="protein sequence ID" value="ACC77776.1"/>
    <property type="molecule type" value="Genomic_DNA"/>
</dbReference>
<dbReference type="SMR" id="B5G6H2"/>
<dbReference type="GO" id="GO:0005576">
    <property type="term" value="C:extracellular region"/>
    <property type="evidence" value="ECO:0000250"/>
    <property type="project" value="UniProtKB"/>
</dbReference>
<dbReference type="GO" id="GO:0005615">
    <property type="term" value="C:extracellular space"/>
    <property type="evidence" value="ECO:0007669"/>
    <property type="project" value="TreeGrafter"/>
</dbReference>
<dbReference type="GO" id="GO:0004867">
    <property type="term" value="F:serine-type endopeptidase inhibitor activity"/>
    <property type="evidence" value="ECO:0007669"/>
    <property type="project" value="TreeGrafter"/>
</dbReference>
<dbReference type="GO" id="GO:0019731">
    <property type="term" value="P:antibacterial humoral response"/>
    <property type="evidence" value="ECO:0007669"/>
    <property type="project" value="TreeGrafter"/>
</dbReference>
<dbReference type="GO" id="GO:0045087">
    <property type="term" value="P:innate immune response"/>
    <property type="evidence" value="ECO:0007669"/>
    <property type="project" value="TreeGrafter"/>
</dbReference>
<dbReference type="GO" id="GO:0044278">
    <property type="term" value="P:venom-mediated disruption of cell wall in another organism"/>
    <property type="evidence" value="ECO:0000250"/>
    <property type="project" value="UniProtKB"/>
</dbReference>
<dbReference type="Gene3D" id="4.10.75.10">
    <property type="entry name" value="Elafin-like"/>
    <property type="match status" value="1"/>
</dbReference>
<dbReference type="InterPro" id="IPR036645">
    <property type="entry name" value="Elafin-like_sf"/>
</dbReference>
<dbReference type="InterPro" id="IPR008197">
    <property type="entry name" value="WAP_dom"/>
</dbReference>
<dbReference type="InterPro" id="IPR050514">
    <property type="entry name" value="WAP_four-disulfide_core"/>
</dbReference>
<dbReference type="PANTHER" id="PTHR19441:SF44">
    <property type="entry name" value="ANTILEUKOPROTEINASE"/>
    <property type="match status" value="1"/>
</dbReference>
<dbReference type="PANTHER" id="PTHR19441">
    <property type="entry name" value="WHEY ACDIC PROTEIN WAP"/>
    <property type="match status" value="1"/>
</dbReference>
<dbReference type="Pfam" id="PF00095">
    <property type="entry name" value="WAP"/>
    <property type="match status" value="1"/>
</dbReference>
<dbReference type="PRINTS" id="PR00003">
    <property type="entry name" value="4DISULPHCORE"/>
</dbReference>
<dbReference type="SMART" id="SM00217">
    <property type="entry name" value="WAP"/>
    <property type="match status" value="1"/>
</dbReference>
<dbReference type="SUPFAM" id="SSF57256">
    <property type="entry name" value="Elafin-like"/>
    <property type="match status" value="1"/>
</dbReference>
<dbReference type="PROSITE" id="PS51390">
    <property type="entry name" value="WAP"/>
    <property type="match status" value="1"/>
</dbReference>
<proteinExistence type="inferred from homology"/>
<keyword id="KW-0044">Antibiotic</keyword>
<keyword id="KW-0929">Antimicrobial</keyword>
<keyword id="KW-1015">Disulfide bond</keyword>
<keyword id="KW-0964">Secreted</keyword>
<keyword id="KW-0732">Signal</keyword>
<accession>B5G6H2</accession>
<name>WAPA_TROCA</name>
<sequence>MSSGGLLLLLGLLTLWAELTPISGQDRPKKPGLCPPRPQKPPCVRECKNDWRCPGEQKCCRYGCIYECRDPIFVK</sequence>
<comment type="function">
    <text evidence="1">Damages membranes of susceptible bacteria. Has no hemolytic activity. Not toxic to mice. Does not inhibit the proteinases elastase and cathepsin G.</text>
</comment>
<comment type="subcellular location">
    <subcellularLocation>
        <location evidence="6">Secreted</location>
    </subcellularLocation>
</comment>
<comment type="tissue specificity">
    <text evidence="6">Expressed by the venom gland.</text>
</comment>
<comment type="similarity">
    <text evidence="5">Belongs to the venom waprin family.</text>
</comment>
<organism>
    <name type="scientific">Tropidechis carinatus</name>
    <name type="common">Australian rough-scaled snake</name>
    <dbReference type="NCBI Taxonomy" id="100989"/>
    <lineage>
        <taxon>Eukaryota</taxon>
        <taxon>Metazoa</taxon>
        <taxon>Chordata</taxon>
        <taxon>Craniata</taxon>
        <taxon>Vertebrata</taxon>
        <taxon>Euteleostomi</taxon>
        <taxon>Lepidosauria</taxon>
        <taxon>Squamata</taxon>
        <taxon>Bifurcata</taxon>
        <taxon>Unidentata</taxon>
        <taxon>Episquamata</taxon>
        <taxon>Toxicofera</taxon>
        <taxon>Serpentes</taxon>
        <taxon>Colubroidea</taxon>
        <taxon>Elapidae</taxon>
        <taxon>Notechinae</taxon>
        <taxon>Tropidechis</taxon>
    </lineage>
</organism>
<evidence type="ECO:0000250" key="1">
    <source>
        <dbReference type="UniProtKB" id="P83952"/>
    </source>
</evidence>
<evidence type="ECO:0000255" key="2"/>
<evidence type="ECO:0000255" key="3">
    <source>
        <dbReference type="PROSITE-ProRule" id="PRU00722"/>
    </source>
</evidence>
<evidence type="ECO:0000303" key="4">
    <source>
    </source>
</evidence>
<evidence type="ECO:0000305" key="5"/>
<evidence type="ECO:0000305" key="6">
    <source>
    </source>
</evidence>
<protein>
    <recommendedName>
        <fullName evidence="4">Carwaprin-a</fullName>
    </recommendedName>
</protein>
<reference key="1">
    <citation type="journal article" date="2008" name="Cell. Mol. Life Sci.">
        <title>Common evolution of waprin and Kunitz-like toxin families in Australian venomous snakes.</title>
        <authorList>
            <person name="St Pierre L."/>
            <person name="Earl S.T."/>
            <person name="Filippovich I."/>
            <person name="Sorokina N."/>
            <person name="Masci P.P."/>
            <person name="De Jersey J."/>
            <person name="Lavin M.F."/>
        </authorList>
    </citation>
    <scope>NUCLEOTIDE SEQUENCE [GENOMIC DNA / MRNA]</scope>
    <source>
        <tissue>Venom gland</tissue>
    </source>
</reference>